<keyword id="KW-0066">ATP synthesis</keyword>
<keyword id="KW-1003">Cell membrane</keyword>
<keyword id="KW-0138">CF(0)</keyword>
<keyword id="KW-0375">Hydrogen ion transport</keyword>
<keyword id="KW-0406">Ion transport</keyword>
<keyword id="KW-0446">Lipid-binding</keyword>
<keyword id="KW-0472">Membrane</keyword>
<keyword id="KW-0812">Transmembrane</keyword>
<keyword id="KW-1133">Transmembrane helix</keyword>
<keyword id="KW-0813">Transport</keyword>
<protein>
    <recommendedName>
        <fullName evidence="1">ATP synthase subunit c</fullName>
    </recommendedName>
    <alternativeName>
        <fullName evidence="1">ATP synthase F(0) sector subunit c</fullName>
    </alternativeName>
    <alternativeName>
        <fullName evidence="1">F-type ATPase subunit c</fullName>
        <shortName evidence="1">F-ATPase subunit c</shortName>
    </alternativeName>
    <alternativeName>
        <fullName evidence="1">Lipid-binding protein</fullName>
    </alternativeName>
</protein>
<accession>A6U3J3</accession>
<dbReference type="EMBL" id="CP000736">
    <property type="protein sequence ID" value="ABR53011.1"/>
    <property type="molecule type" value="Genomic_DNA"/>
</dbReference>
<dbReference type="SMR" id="A6U3J3"/>
<dbReference type="KEGG" id="sah:SaurJH1_2182"/>
<dbReference type="HOGENOM" id="CLU_148047_1_1_9"/>
<dbReference type="GO" id="GO:0005886">
    <property type="term" value="C:plasma membrane"/>
    <property type="evidence" value="ECO:0007669"/>
    <property type="project" value="UniProtKB-SubCell"/>
</dbReference>
<dbReference type="GO" id="GO:0045259">
    <property type="term" value="C:proton-transporting ATP synthase complex"/>
    <property type="evidence" value="ECO:0007669"/>
    <property type="project" value="UniProtKB-KW"/>
</dbReference>
<dbReference type="GO" id="GO:0033177">
    <property type="term" value="C:proton-transporting two-sector ATPase complex, proton-transporting domain"/>
    <property type="evidence" value="ECO:0007669"/>
    <property type="project" value="InterPro"/>
</dbReference>
<dbReference type="GO" id="GO:0008289">
    <property type="term" value="F:lipid binding"/>
    <property type="evidence" value="ECO:0007669"/>
    <property type="project" value="UniProtKB-KW"/>
</dbReference>
<dbReference type="GO" id="GO:0046933">
    <property type="term" value="F:proton-transporting ATP synthase activity, rotational mechanism"/>
    <property type="evidence" value="ECO:0007669"/>
    <property type="project" value="UniProtKB-UniRule"/>
</dbReference>
<dbReference type="CDD" id="cd18185">
    <property type="entry name" value="ATP-synt_Fo_c_ATPE"/>
    <property type="match status" value="1"/>
</dbReference>
<dbReference type="FunFam" id="1.20.20.10:FF:000004">
    <property type="entry name" value="ATP synthase subunit c"/>
    <property type="match status" value="1"/>
</dbReference>
<dbReference type="Gene3D" id="1.20.20.10">
    <property type="entry name" value="F1F0 ATP synthase subunit C"/>
    <property type="match status" value="1"/>
</dbReference>
<dbReference type="HAMAP" id="MF_01396">
    <property type="entry name" value="ATP_synth_c_bact"/>
    <property type="match status" value="1"/>
</dbReference>
<dbReference type="InterPro" id="IPR005953">
    <property type="entry name" value="ATP_synth_csu_bac/chlpt"/>
</dbReference>
<dbReference type="InterPro" id="IPR000454">
    <property type="entry name" value="ATP_synth_F0_csu"/>
</dbReference>
<dbReference type="InterPro" id="IPR020537">
    <property type="entry name" value="ATP_synth_F0_csu_DDCD_BS"/>
</dbReference>
<dbReference type="InterPro" id="IPR038662">
    <property type="entry name" value="ATP_synth_F0_csu_sf"/>
</dbReference>
<dbReference type="InterPro" id="IPR002379">
    <property type="entry name" value="ATPase_proteolipid_c-like_dom"/>
</dbReference>
<dbReference type="InterPro" id="IPR035921">
    <property type="entry name" value="F/V-ATP_Csub_sf"/>
</dbReference>
<dbReference type="NCBIfam" id="TIGR01260">
    <property type="entry name" value="ATP_synt_c"/>
    <property type="match status" value="1"/>
</dbReference>
<dbReference type="NCBIfam" id="NF005363">
    <property type="entry name" value="PRK06876.1"/>
    <property type="match status" value="1"/>
</dbReference>
<dbReference type="Pfam" id="PF00137">
    <property type="entry name" value="ATP-synt_C"/>
    <property type="match status" value="1"/>
</dbReference>
<dbReference type="PRINTS" id="PR00124">
    <property type="entry name" value="ATPASEC"/>
</dbReference>
<dbReference type="SUPFAM" id="SSF81333">
    <property type="entry name" value="F1F0 ATP synthase subunit C"/>
    <property type="match status" value="1"/>
</dbReference>
<dbReference type="PROSITE" id="PS00605">
    <property type="entry name" value="ATPASE_C"/>
    <property type="match status" value="1"/>
</dbReference>
<sequence length="70" mass="6979">MNLIAAAIAIGLSALGAGIGNGLIVSRTVEGVARQPEARGQLMGIMFIGVGLVEALPIIGVVIAFMTFAG</sequence>
<name>ATPL_STAA2</name>
<comment type="function">
    <text evidence="1">F(1)F(0) ATP synthase produces ATP from ADP in the presence of a proton or sodium gradient. F-type ATPases consist of two structural domains, F(1) containing the extramembraneous catalytic core and F(0) containing the membrane proton channel, linked together by a central stalk and a peripheral stalk. During catalysis, ATP synthesis in the catalytic domain of F(1) is coupled via a rotary mechanism of the central stalk subunits to proton translocation.</text>
</comment>
<comment type="function">
    <text evidence="1">Key component of the F(0) channel; it plays a direct role in translocation across the membrane. A homomeric c-ring of between 10-14 subunits forms the central stalk rotor element with the F(1) delta and epsilon subunits.</text>
</comment>
<comment type="subunit">
    <text evidence="1">F-type ATPases have 2 components, F(1) - the catalytic core - and F(0) - the membrane proton channel. F(1) has five subunits: alpha(3), beta(3), gamma(1), delta(1), epsilon(1). F(0) has three main subunits: a(1), b(2) and c(10-14). The alpha and beta chains form an alternating ring which encloses part of the gamma chain. F(1) is attached to F(0) by a central stalk formed by the gamma and epsilon chains, while a peripheral stalk is formed by the delta and b chains.</text>
</comment>
<comment type="subcellular location">
    <subcellularLocation>
        <location evidence="1">Cell membrane</location>
        <topology evidence="1">Multi-pass membrane protein</topology>
    </subcellularLocation>
</comment>
<comment type="similarity">
    <text evidence="1">Belongs to the ATPase C chain family.</text>
</comment>
<evidence type="ECO:0000255" key="1">
    <source>
        <dbReference type="HAMAP-Rule" id="MF_01396"/>
    </source>
</evidence>
<feature type="chain" id="PRO_1000184494" description="ATP synthase subunit c">
    <location>
        <begin position="1"/>
        <end position="70"/>
    </location>
</feature>
<feature type="transmembrane region" description="Helical" evidence="1">
    <location>
        <begin position="4"/>
        <end position="24"/>
    </location>
</feature>
<feature type="transmembrane region" description="Helical" evidence="1">
    <location>
        <begin position="45"/>
        <end position="65"/>
    </location>
</feature>
<feature type="site" description="Reversibly protonated during proton transport" evidence="1">
    <location>
        <position position="54"/>
    </location>
</feature>
<reference key="1">
    <citation type="submission" date="2007-06" db="EMBL/GenBank/DDBJ databases">
        <title>Complete sequence of chromosome of Staphylococcus aureus subsp. aureus JH1.</title>
        <authorList>
            <consortium name="US DOE Joint Genome Institute"/>
            <person name="Copeland A."/>
            <person name="Lucas S."/>
            <person name="Lapidus A."/>
            <person name="Barry K."/>
            <person name="Detter J.C."/>
            <person name="Glavina del Rio T."/>
            <person name="Hammon N."/>
            <person name="Israni S."/>
            <person name="Dalin E."/>
            <person name="Tice H."/>
            <person name="Pitluck S."/>
            <person name="Chain P."/>
            <person name="Malfatti S."/>
            <person name="Shin M."/>
            <person name="Vergez L."/>
            <person name="Schmutz J."/>
            <person name="Larimer F."/>
            <person name="Land M."/>
            <person name="Hauser L."/>
            <person name="Kyrpides N."/>
            <person name="Ivanova N."/>
            <person name="Tomasz A."/>
            <person name="Richardson P."/>
        </authorList>
    </citation>
    <scope>NUCLEOTIDE SEQUENCE [LARGE SCALE GENOMIC DNA]</scope>
    <source>
        <strain>JH1</strain>
    </source>
</reference>
<gene>
    <name evidence="1" type="primary">atpE</name>
    <name type="ordered locus">SaurJH1_2182</name>
</gene>
<proteinExistence type="inferred from homology"/>
<organism>
    <name type="scientific">Staphylococcus aureus (strain JH1)</name>
    <dbReference type="NCBI Taxonomy" id="359787"/>
    <lineage>
        <taxon>Bacteria</taxon>
        <taxon>Bacillati</taxon>
        <taxon>Bacillota</taxon>
        <taxon>Bacilli</taxon>
        <taxon>Bacillales</taxon>
        <taxon>Staphylococcaceae</taxon>
        <taxon>Staphylococcus</taxon>
    </lineage>
</organism>